<name>VSP1_PROEL</name>
<feature type="chain" id="PRO_0000227535" description="Thrombin-like enzyme elegaxobin-1">
    <location>
        <begin position="1"/>
        <end position="233"/>
    </location>
</feature>
<feature type="domain" description="Peptidase S1" evidence="4">
    <location>
        <begin position="1"/>
        <end position="224"/>
    </location>
</feature>
<feature type="active site" description="Charge relay system" evidence="2">
    <location>
        <position position="40"/>
    </location>
</feature>
<feature type="active site" description="Charge relay system" evidence="2">
    <location>
        <position position="85"/>
    </location>
</feature>
<feature type="active site" description="Charge relay system" evidence="2">
    <location>
        <position position="179"/>
    </location>
</feature>
<feature type="disulfide bond" evidence="3 4">
    <location>
        <begin position="7"/>
        <end position="138"/>
    </location>
</feature>
<feature type="disulfide bond" evidence="3 4">
    <location>
        <begin position="25"/>
        <end position="41"/>
    </location>
</feature>
<feature type="disulfide bond" evidence="3 4">
    <location>
        <begin position="73"/>
        <end position="231"/>
    </location>
</feature>
<feature type="disulfide bond" evidence="3 4">
    <location>
        <begin position="117"/>
        <end position="185"/>
    </location>
</feature>
<feature type="disulfide bond" evidence="3 4">
    <location>
        <begin position="149"/>
        <end position="164"/>
    </location>
</feature>
<feature type="disulfide bond" evidence="3 4">
    <location>
        <begin position="175"/>
        <end position="200"/>
    </location>
</feature>
<keyword id="KW-1204">Blood coagulation cascade activating toxin</keyword>
<keyword id="KW-0903">Direct protein sequencing</keyword>
<keyword id="KW-1015">Disulfide bond</keyword>
<keyword id="KW-1199">Hemostasis impairing toxin</keyword>
<keyword id="KW-0378">Hydrolase</keyword>
<keyword id="KW-0645">Protease</keyword>
<keyword id="KW-0964">Secreted</keyword>
<keyword id="KW-0720">Serine protease</keyword>
<keyword id="KW-0800">Toxin</keyword>
<organism>
    <name type="scientific">Protobothrops elegans</name>
    <name type="common">Elegant pitviper</name>
    <name type="synonym">Trimeresurus elegans</name>
    <dbReference type="NCBI Taxonomy" id="88086"/>
    <lineage>
        <taxon>Eukaryota</taxon>
        <taxon>Metazoa</taxon>
        <taxon>Chordata</taxon>
        <taxon>Craniata</taxon>
        <taxon>Vertebrata</taxon>
        <taxon>Euteleostomi</taxon>
        <taxon>Lepidosauria</taxon>
        <taxon>Squamata</taxon>
        <taxon>Bifurcata</taxon>
        <taxon>Unidentata</taxon>
        <taxon>Episquamata</taxon>
        <taxon>Toxicofera</taxon>
        <taxon>Serpentes</taxon>
        <taxon>Colubroidea</taxon>
        <taxon>Viperidae</taxon>
        <taxon>Crotalinae</taxon>
        <taxon>Protobothrops</taxon>
    </lineage>
</organism>
<dbReference type="EC" id="3.4.21.-"/>
<dbReference type="SMR" id="P84788"/>
<dbReference type="GO" id="GO:0005576">
    <property type="term" value="C:extracellular region"/>
    <property type="evidence" value="ECO:0000314"/>
    <property type="project" value="UniProtKB"/>
</dbReference>
<dbReference type="GO" id="GO:0030141">
    <property type="term" value="C:secretory granule"/>
    <property type="evidence" value="ECO:0007669"/>
    <property type="project" value="TreeGrafter"/>
</dbReference>
<dbReference type="GO" id="GO:0004252">
    <property type="term" value="F:serine-type endopeptidase activity"/>
    <property type="evidence" value="ECO:0000314"/>
    <property type="project" value="UniProtKB"/>
</dbReference>
<dbReference type="GO" id="GO:0090729">
    <property type="term" value="F:toxin activity"/>
    <property type="evidence" value="ECO:0000314"/>
    <property type="project" value="UniProtKB"/>
</dbReference>
<dbReference type="GO" id="GO:0006508">
    <property type="term" value="P:proteolysis"/>
    <property type="evidence" value="ECO:0007669"/>
    <property type="project" value="UniProtKB-KW"/>
</dbReference>
<dbReference type="GO" id="GO:0044485">
    <property type="term" value="P:venom-mediated fibrinogenolysis in another organism"/>
    <property type="evidence" value="ECO:0000314"/>
    <property type="project" value="UniProtKB"/>
</dbReference>
<dbReference type="GO" id="GO:0044470">
    <property type="term" value="P:venom-mediated suppression of blood coagulation"/>
    <property type="evidence" value="ECO:0000314"/>
    <property type="project" value="UniProtKB"/>
</dbReference>
<dbReference type="CDD" id="cd00190">
    <property type="entry name" value="Tryp_SPc"/>
    <property type="match status" value="1"/>
</dbReference>
<dbReference type="FunFam" id="2.40.10.10:FF:000158">
    <property type="entry name" value="Thrombin-like enzyme saxthrombin"/>
    <property type="match status" value="1"/>
</dbReference>
<dbReference type="FunFam" id="2.40.10.10:FF:000153">
    <property type="entry name" value="Venom plasminogen activator TSV-PA"/>
    <property type="match status" value="1"/>
</dbReference>
<dbReference type="Gene3D" id="2.40.10.10">
    <property type="entry name" value="Trypsin-like serine proteases"/>
    <property type="match status" value="2"/>
</dbReference>
<dbReference type="InterPro" id="IPR009003">
    <property type="entry name" value="Peptidase_S1_PA"/>
</dbReference>
<dbReference type="InterPro" id="IPR043504">
    <property type="entry name" value="Peptidase_S1_PA_chymotrypsin"/>
</dbReference>
<dbReference type="InterPro" id="IPR001314">
    <property type="entry name" value="Peptidase_S1A"/>
</dbReference>
<dbReference type="InterPro" id="IPR001254">
    <property type="entry name" value="Trypsin_dom"/>
</dbReference>
<dbReference type="InterPro" id="IPR018114">
    <property type="entry name" value="TRYPSIN_HIS"/>
</dbReference>
<dbReference type="InterPro" id="IPR033116">
    <property type="entry name" value="TRYPSIN_SER"/>
</dbReference>
<dbReference type="PANTHER" id="PTHR24271:SF47">
    <property type="entry name" value="KALLIKREIN-1"/>
    <property type="match status" value="1"/>
</dbReference>
<dbReference type="PANTHER" id="PTHR24271">
    <property type="entry name" value="KALLIKREIN-RELATED"/>
    <property type="match status" value="1"/>
</dbReference>
<dbReference type="Pfam" id="PF00089">
    <property type="entry name" value="Trypsin"/>
    <property type="match status" value="1"/>
</dbReference>
<dbReference type="PRINTS" id="PR00722">
    <property type="entry name" value="CHYMOTRYPSIN"/>
</dbReference>
<dbReference type="SMART" id="SM00020">
    <property type="entry name" value="Tryp_SPc"/>
    <property type="match status" value="1"/>
</dbReference>
<dbReference type="SUPFAM" id="SSF50494">
    <property type="entry name" value="Trypsin-like serine proteases"/>
    <property type="match status" value="1"/>
</dbReference>
<dbReference type="PROSITE" id="PS50240">
    <property type="entry name" value="TRYPSIN_DOM"/>
    <property type="match status" value="1"/>
</dbReference>
<dbReference type="PROSITE" id="PS00134">
    <property type="entry name" value="TRYPSIN_HIS"/>
    <property type="match status" value="1"/>
</dbReference>
<dbReference type="PROSITE" id="PS00135">
    <property type="entry name" value="TRYPSIN_SER"/>
    <property type="match status" value="1"/>
</dbReference>
<comment type="function">
    <text evidence="5">Thrombin-like snake venom serine protease that clots rabbit fibrinogen. Only the beta chain of fibrinogen (FGB) is cleaved, releasing fibrinopeptide B. Incubation with human fibrinogen alpha and beta resulted in cleavage of both fibrinogen chains but generated neither fibrinopeptide A nor fibrinopeptide B. Promotes clotting of rabbit fibrinogen, but not bovine or human fibrinogen.</text>
</comment>
<comment type="subunit">
    <text evidence="1">Monomer.</text>
</comment>
<comment type="subcellular location">
    <subcellularLocation>
        <location evidence="5 6">Secreted</location>
    </subcellularLocation>
</comment>
<comment type="tissue specificity">
    <text evidence="5 6">Expressed by the venom gland.</text>
</comment>
<comment type="similarity">
    <text evidence="4">Belongs to the peptidase S1 family. Snake venom subfamily.</text>
</comment>
<protein>
    <recommendedName>
        <fullName>Thrombin-like enzyme elegaxobin-1</fullName>
        <shortName>SVTLE</shortName>
        <ecNumber>3.4.21.-</ecNumber>
    </recommendedName>
    <alternativeName>
        <fullName>Elegaxobin I</fullName>
    </alternativeName>
    <alternativeName>
        <fullName>Fibrinogen-clotting enzyme</fullName>
    </alternativeName>
    <alternativeName>
        <fullName>Snake venom serine protease</fullName>
        <shortName>SVSP</shortName>
    </alternativeName>
</protein>
<accession>P84788</accession>
<reference evidence="7" key="1">
    <citation type="journal article" date="2002" name="Toxicon">
        <title>Amino acid sequence of a thrombin like enzyme, elegaxobin, from the venom of Trimeresurus elegans (Sakishima-habu).</title>
        <authorList>
            <person name="Oyama E."/>
            <person name="Takahashi H."/>
        </authorList>
    </citation>
    <scope>PROTEIN SEQUENCE</scope>
    <scope>SUBCELLULAR LOCATION</scope>
    <scope>TISSUE SPECIFICITY</scope>
    <source>
        <tissue evidence="6">Venom</tissue>
    </source>
</reference>
<reference evidence="7" key="2">
    <citation type="journal article" date="2000" name="Toxicon">
        <title>Purification and characterization of a thrombin-like enzyme, elegaxobin, from the venom of Trimeresurus elegans (Sakishima-habu).</title>
        <authorList>
            <person name="Oyama E."/>
            <person name="Takahashi H."/>
        </authorList>
    </citation>
    <scope>PROTEIN SEQUENCE OF 1-10</scope>
    <scope>FUNCTION</scope>
    <scope>SUBCELLULAR LOCATION</scope>
    <scope>TISSUE SPECIFICITY</scope>
    <source>
        <tissue evidence="5">Venom</tissue>
    </source>
</reference>
<proteinExistence type="evidence at protein level"/>
<sequence length="233" mass="25440">VIGGDECNINEHPFLVLVYYDDYQCGGTLINEEWVLTAAHCNGKNMEIYLGVHSKKVPNKDVQRRVPKEKFFCDSSKTYTKWNKDIMLIRLDRPVRKSAHIAPLSLPSSPPSVGSVCRVMGWGTITSPQETYPDVPHCAKINLLDYSECRAAYPGLPPKSRTLCAGVLEGGKDTCGGDSGGPLICNGQFQGIVSWGGDPCAQPHEPGSYTNVFDHLDWIKGIIAGNTDATCPL</sequence>
<evidence type="ECO:0000250" key="1"/>
<evidence type="ECO:0000250" key="2">
    <source>
        <dbReference type="UniProtKB" id="P12544"/>
    </source>
</evidence>
<evidence type="ECO:0000250" key="3">
    <source>
        <dbReference type="UniProtKB" id="Q9PSN3"/>
    </source>
</evidence>
<evidence type="ECO:0000255" key="4">
    <source>
        <dbReference type="PROSITE-ProRule" id="PRU00274"/>
    </source>
</evidence>
<evidence type="ECO:0000269" key="5">
    <source>
    </source>
</evidence>
<evidence type="ECO:0000269" key="6">
    <source>
    </source>
</evidence>
<evidence type="ECO:0000305" key="7"/>